<protein>
    <recommendedName>
        <fullName>RUN domain-containing protein 3A</fullName>
    </recommendedName>
</protein>
<sequence>MEASFVQTTMALGLSSKKASSRNVAVERRNLITVCRFSVKTLLEKYTTEPIDDSSEEFVNFAAILEQILSHRFKGPVSWFSSDGQRGFWDYIRLACSKVPNNCVSSIENMENISTARAKGRAWIRVALMEKRMSEYITTALRDTRTTRRFYDSGAIMMREEATVLTGMLIGLSAIDFSFCLKGEVLDGKTPVVIDYTPYLKFTQSYDYLTDEEERHSAESSTSEDNSPEHPYLPLVTDEDSWYSKWHKMEQKFRIVYAQKGYLEELVRLRESQLKDLEAENRRLQLQLEEAAAQNQREKRELEGVILELQEQLTGLIPGDHAPLAQGSKDLTTRLVNQWPSLGTLSGAEGANNPKLYRRHSFMSTEPLSAEASLSSDSQRLGEGKRDEEPWGPIGKDPTPSMLGLCGSLASIPSCKSLASFKSNECLVSDSPEGSPALSPS</sequence>
<reference key="1">
    <citation type="submission" date="2006-06" db="EMBL/GenBank/DDBJ databases">
        <authorList>
            <consortium name="NIH - Mammalian Gene Collection (MGC) project"/>
        </authorList>
    </citation>
    <scope>NUCLEOTIDE SEQUENCE [LARGE SCALE MRNA]</scope>
    <source>
        <strain>Hereford</strain>
        <tissue>Brain cortex</tissue>
    </source>
</reference>
<feature type="chain" id="PRO_0000324154" description="RUN domain-containing protein 3A">
    <location>
        <begin position="1"/>
        <end position="441"/>
    </location>
</feature>
<feature type="domain" description="RUN" evidence="4">
    <location>
        <begin position="52"/>
        <end position="184"/>
    </location>
</feature>
<feature type="region of interest" description="Interaction with RAP2A" evidence="1">
    <location>
        <begin position="1"/>
        <end position="293"/>
    </location>
</feature>
<feature type="region of interest" description="Disordered" evidence="5">
    <location>
        <begin position="211"/>
        <end position="234"/>
    </location>
</feature>
<feature type="region of interest" description="Disordered" evidence="5">
    <location>
        <begin position="367"/>
        <end position="399"/>
    </location>
</feature>
<feature type="coiled-coil region" evidence="3">
    <location>
        <begin position="262"/>
        <end position="317"/>
    </location>
</feature>
<feature type="compositionally biased region" description="Polar residues" evidence="5">
    <location>
        <begin position="367"/>
        <end position="379"/>
    </location>
</feature>
<feature type="compositionally biased region" description="Basic and acidic residues" evidence="5">
    <location>
        <begin position="380"/>
        <end position="389"/>
    </location>
</feature>
<feature type="modified residue" description="Phosphothreonine" evidence="2">
    <location>
        <position position="210"/>
    </location>
</feature>
<feature type="modified residue" description="Phosphoserine" evidence="2">
    <location>
        <position position="227"/>
    </location>
</feature>
<feature type="modified residue" description="Phosphoserine" evidence="2">
    <location>
        <position position="411"/>
    </location>
</feature>
<feature type="modified residue" description="Phosphoserine" evidence="2">
    <location>
        <position position="414"/>
    </location>
</feature>
<evidence type="ECO:0000250" key="1"/>
<evidence type="ECO:0000250" key="2">
    <source>
        <dbReference type="UniProtKB" id="O08576"/>
    </source>
</evidence>
<evidence type="ECO:0000255" key="3"/>
<evidence type="ECO:0000255" key="4">
    <source>
        <dbReference type="PROSITE-ProRule" id="PRU00178"/>
    </source>
</evidence>
<evidence type="ECO:0000256" key="5">
    <source>
        <dbReference type="SAM" id="MobiDB-lite"/>
    </source>
</evidence>
<evidence type="ECO:0000305" key="6"/>
<comment type="function">
    <text evidence="1">May act as an effector of RAP2A in neuronal cells.</text>
</comment>
<comment type="subunit">
    <text evidence="1">Interacts with the GTP-bound form of RAP2A.</text>
</comment>
<comment type="similarity">
    <text evidence="6">Belongs to the RUNDC3 family.</text>
</comment>
<keyword id="KW-0175">Coiled coil</keyword>
<keyword id="KW-0597">Phosphoprotein</keyword>
<keyword id="KW-1185">Reference proteome</keyword>
<name>RUN3A_BOVIN</name>
<gene>
    <name type="primary">RUNDC3A</name>
</gene>
<organism>
    <name type="scientific">Bos taurus</name>
    <name type="common">Bovine</name>
    <dbReference type="NCBI Taxonomy" id="9913"/>
    <lineage>
        <taxon>Eukaryota</taxon>
        <taxon>Metazoa</taxon>
        <taxon>Chordata</taxon>
        <taxon>Craniata</taxon>
        <taxon>Vertebrata</taxon>
        <taxon>Euteleostomi</taxon>
        <taxon>Mammalia</taxon>
        <taxon>Eutheria</taxon>
        <taxon>Laurasiatheria</taxon>
        <taxon>Artiodactyla</taxon>
        <taxon>Ruminantia</taxon>
        <taxon>Pecora</taxon>
        <taxon>Bovidae</taxon>
        <taxon>Bovinae</taxon>
        <taxon>Bos</taxon>
    </lineage>
</organism>
<accession>Q17QK1</accession>
<proteinExistence type="evidence at transcript level"/>
<dbReference type="EMBL" id="BC118315">
    <property type="protein sequence ID" value="AAI18316.1"/>
    <property type="molecule type" value="mRNA"/>
</dbReference>
<dbReference type="RefSeq" id="NP_001069790.1">
    <property type="nucleotide sequence ID" value="NM_001076322.1"/>
</dbReference>
<dbReference type="SMR" id="Q17QK1"/>
<dbReference type="FunCoup" id="Q17QK1">
    <property type="interactions" value="640"/>
</dbReference>
<dbReference type="STRING" id="9913.ENSBTAP00000062163"/>
<dbReference type="PaxDb" id="9913-ENSBTAP00000002119"/>
<dbReference type="GeneID" id="614322"/>
<dbReference type="KEGG" id="bta:614322"/>
<dbReference type="CTD" id="10900"/>
<dbReference type="VEuPathDB" id="HostDB:ENSBTAG00000001615"/>
<dbReference type="eggNOG" id="KOG4381">
    <property type="taxonomic scope" value="Eukaryota"/>
</dbReference>
<dbReference type="HOGENOM" id="CLU_045987_0_0_1"/>
<dbReference type="InParanoid" id="Q17QK1"/>
<dbReference type="OMA" id="FWEYVRL"/>
<dbReference type="OrthoDB" id="10029904at2759"/>
<dbReference type="TreeFam" id="TF323904"/>
<dbReference type="Proteomes" id="UP000009136">
    <property type="component" value="Chromosome 19"/>
</dbReference>
<dbReference type="Bgee" id="ENSBTAG00000001615">
    <property type="expression patterns" value="Expressed in temporal cortex and 89 other cell types or tissues"/>
</dbReference>
<dbReference type="GO" id="GO:0010753">
    <property type="term" value="P:positive regulation of cGMP-mediated signaling"/>
    <property type="evidence" value="ECO:0000318"/>
    <property type="project" value="GO_Central"/>
</dbReference>
<dbReference type="CDD" id="cd17699">
    <property type="entry name" value="RUN_RUNDC3A"/>
    <property type="match status" value="1"/>
</dbReference>
<dbReference type="FunFam" id="1.20.58.900:FF:000005">
    <property type="entry name" value="RUN domain-containing protein 3A isoform X1"/>
    <property type="match status" value="1"/>
</dbReference>
<dbReference type="Gene3D" id="1.20.58.900">
    <property type="match status" value="1"/>
</dbReference>
<dbReference type="InterPro" id="IPR004012">
    <property type="entry name" value="Run_dom"/>
</dbReference>
<dbReference type="InterPro" id="IPR037213">
    <property type="entry name" value="Run_dom_sf"/>
</dbReference>
<dbReference type="InterPro" id="IPR047338">
    <property type="entry name" value="RUN_RUNDC3A"/>
</dbReference>
<dbReference type="InterPro" id="IPR047340">
    <property type="entry name" value="RUNDC3A_B"/>
</dbReference>
<dbReference type="PANTHER" id="PTHR46251">
    <property type="entry name" value="RUN DOMAIN-CONTAINING 3 PROTEIN RUNDC3"/>
    <property type="match status" value="1"/>
</dbReference>
<dbReference type="PANTHER" id="PTHR46251:SF4">
    <property type="entry name" value="RUN DOMAIN-CONTAINING PROTEIN 3A"/>
    <property type="match status" value="1"/>
</dbReference>
<dbReference type="Pfam" id="PF02759">
    <property type="entry name" value="RUN"/>
    <property type="match status" value="1"/>
</dbReference>
<dbReference type="SMART" id="SM00593">
    <property type="entry name" value="RUN"/>
    <property type="match status" value="1"/>
</dbReference>
<dbReference type="SUPFAM" id="SSF140741">
    <property type="entry name" value="RUN domain-like"/>
    <property type="match status" value="1"/>
</dbReference>
<dbReference type="PROSITE" id="PS50826">
    <property type="entry name" value="RUN"/>
    <property type="match status" value="1"/>
</dbReference>